<accession>P53814</accession>
<accession>O00569</accession>
<accession>O95769</accession>
<accession>O95937</accession>
<accession>Q8N4H8</accession>
<accession>Q8WWW1</accession>
<accession>Q8WWW2</accession>
<accession>Q9P1S8</accession>
<accession>Q9UIT1</accession>
<accession>Q9UIT2</accession>
<organism>
    <name type="scientific">Homo sapiens</name>
    <name type="common">Human</name>
    <dbReference type="NCBI Taxonomy" id="9606"/>
    <lineage>
        <taxon>Eukaryota</taxon>
        <taxon>Metazoa</taxon>
        <taxon>Chordata</taxon>
        <taxon>Craniata</taxon>
        <taxon>Vertebrata</taxon>
        <taxon>Euteleostomi</taxon>
        <taxon>Mammalia</taxon>
        <taxon>Eutheria</taxon>
        <taxon>Euarchontoglires</taxon>
        <taxon>Primates</taxon>
        <taxon>Haplorrhini</taxon>
        <taxon>Catarrhini</taxon>
        <taxon>Hominidae</taxon>
        <taxon>Homo</taxon>
    </lineage>
</organism>
<feature type="initiator methionine" description="Removed" evidence="20">
    <location>
        <position position="1"/>
    </location>
</feature>
<feature type="chain" id="PRO_0000071976" description="Smoothelin">
    <location>
        <begin position="2"/>
        <end position="917"/>
    </location>
</feature>
<feature type="domain" description="Calponin-homology (CH)" evidence="2">
    <location>
        <begin position="799"/>
        <end position="906"/>
    </location>
</feature>
<feature type="region of interest" description="Disordered" evidence="3">
    <location>
        <begin position="157"/>
        <end position="456"/>
    </location>
</feature>
<feature type="region of interest" description="Disordered" evidence="3">
    <location>
        <begin position="560"/>
        <end position="580"/>
    </location>
</feature>
<feature type="region of interest" description="Disordered" evidence="3">
    <location>
        <begin position="617"/>
        <end position="767"/>
    </location>
</feature>
<feature type="coiled-coil region" evidence="1">
    <location>
        <begin position="24"/>
        <end position="89"/>
    </location>
</feature>
<feature type="coiled-coil region" evidence="1">
    <location>
        <begin position="603"/>
        <end position="630"/>
    </location>
</feature>
<feature type="compositionally biased region" description="Polar residues" evidence="3">
    <location>
        <begin position="177"/>
        <end position="188"/>
    </location>
</feature>
<feature type="compositionally biased region" description="Low complexity" evidence="3">
    <location>
        <begin position="193"/>
        <end position="210"/>
    </location>
</feature>
<feature type="compositionally biased region" description="Low complexity" evidence="3">
    <location>
        <begin position="220"/>
        <end position="232"/>
    </location>
</feature>
<feature type="compositionally biased region" description="Pro residues" evidence="3">
    <location>
        <begin position="233"/>
        <end position="243"/>
    </location>
</feature>
<feature type="compositionally biased region" description="Low complexity" evidence="3">
    <location>
        <begin position="244"/>
        <end position="258"/>
    </location>
</feature>
<feature type="compositionally biased region" description="Polar residues" evidence="3">
    <location>
        <begin position="298"/>
        <end position="326"/>
    </location>
</feature>
<feature type="compositionally biased region" description="Basic and acidic residues" evidence="3">
    <location>
        <begin position="329"/>
        <end position="338"/>
    </location>
</feature>
<feature type="compositionally biased region" description="Low complexity" evidence="3">
    <location>
        <begin position="363"/>
        <end position="392"/>
    </location>
</feature>
<feature type="compositionally biased region" description="Basic and acidic residues" evidence="3">
    <location>
        <begin position="617"/>
        <end position="640"/>
    </location>
</feature>
<feature type="compositionally biased region" description="Polar residues" evidence="3">
    <location>
        <begin position="676"/>
        <end position="689"/>
    </location>
</feature>
<feature type="compositionally biased region" description="Low complexity" evidence="3">
    <location>
        <begin position="701"/>
        <end position="720"/>
    </location>
</feature>
<feature type="compositionally biased region" description="Basic and acidic residues" evidence="3">
    <location>
        <begin position="738"/>
        <end position="750"/>
    </location>
</feature>
<feature type="modified residue" description="N-acetylalanine" evidence="20">
    <location>
        <position position="2"/>
    </location>
</feature>
<feature type="modified residue" description="Phosphoserine" evidence="19">
    <location>
        <position position="299"/>
    </location>
</feature>
<feature type="modified residue" description="Phosphoserine" evidence="17 19 21">
    <location>
        <position position="301"/>
    </location>
</feature>
<feature type="modified residue" description="Phosphoserine" evidence="17 19 21">
    <location>
        <position position="304"/>
    </location>
</feature>
<feature type="modified residue" description="Phosphoserine" evidence="17 21">
    <location>
        <position position="341"/>
    </location>
</feature>
<feature type="modified residue" description="Phosphothreonine" evidence="19">
    <location>
        <position position="351"/>
    </location>
</feature>
<feature type="modified residue" description="Phosphoserine" evidence="18 19">
    <location>
        <position position="357"/>
    </location>
</feature>
<feature type="modified residue" description="Phosphothreonine" evidence="18 19">
    <location>
        <position position="360"/>
    </location>
</feature>
<feature type="modified residue" description="Phosphothreonine" evidence="17 19">
    <location>
        <position position="373"/>
    </location>
</feature>
<feature type="modified residue" description="Phosphoserine" evidence="17">
    <location>
        <position position="503"/>
    </location>
</feature>
<feature type="modified residue" description="Phosphoserine" evidence="17 19 21">
    <location>
        <position position="514"/>
    </location>
</feature>
<feature type="modified residue" description="Phosphoserine" evidence="21">
    <location>
        <position position="523"/>
    </location>
</feature>
<feature type="modified residue" description="Phosphoserine" evidence="17">
    <location>
        <position position="576"/>
    </location>
</feature>
<feature type="modified residue" description="Phosphoserine" evidence="17 21">
    <location>
        <position position="729"/>
    </location>
</feature>
<feature type="modified residue" description="Phosphoserine" evidence="21">
    <location>
        <position position="792"/>
    </location>
</feature>
<feature type="splice variant" id="VSP_004398" description="In isoform A." evidence="12 14">
    <location>
        <begin position="1"/>
        <end position="456"/>
    </location>
</feature>
<feature type="splice variant" id="VSP_031242" description="In isoform B3." evidence="12">
    <original>E</original>
    <variation>ETHADCPQLLDTEDMVRLREPDWK</variation>
    <location>
        <position position="868"/>
    </location>
</feature>
<feature type="splice variant" id="VSP_007020" description="In isoform B2." evidence="11 12 13 15">
    <original>MLVDCVPLVEVDDMMIMGKKPDPKCVFTYVQSLYNHLRRHELRLRGKNV</original>
    <variation>THADCPQLLDTEDMVRLREPDWKCVYTYIQEFYRCLVQKGLVKTKKS</variation>
    <location>
        <begin position="869"/>
        <end position="917"/>
    </location>
</feature>
<feature type="sequence variant" id="VAR_038785" description="In dbSNP:rs1064178." evidence="4 5 6 9">
    <original>G</original>
    <variation>D</variation>
    <location>
        <position position="455"/>
    </location>
</feature>
<feature type="sequence variant" id="VAR_038786" description="In dbSNP:rs3205187." evidence="4 7 9 10">
    <original>A</original>
    <variation>P</variation>
    <location>
        <position position="547"/>
    </location>
</feature>
<feature type="sequence variant" id="VAR_038787" description="In dbSNP:rs5997872.">
    <original>A</original>
    <variation>V</variation>
    <location>
        <position position="559"/>
    </location>
</feature>
<feature type="sequence variant" id="VAR_038788" description="In dbSNP:rs12158015.">
    <original>A</original>
    <variation>T</variation>
    <location>
        <position position="580"/>
    </location>
</feature>
<feature type="sequence variant" id="VAR_035657" description="In a colorectal cancer sample; somatic mutation; dbSNP:rs777851029." evidence="8">
    <original>R</original>
    <variation>Q</variation>
    <location>
        <position position="637"/>
    </location>
</feature>
<feature type="sequence variant" id="VAR_062223" description="In dbSNP:rs34292278.">
    <original>R</original>
    <variation>C</variation>
    <location>
        <position position="642"/>
    </location>
</feature>
<feature type="sequence variant" id="VAR_035658" description="In a colorectal cancer sample; somatic mutation; dbSNP:rs2043824956." evidence="8">
    <original>A</original>
    <variation>V</variation>
    <location>
        <position position="763"/>
    </location>
</feature>
<feature type="sequence conflict" description="In Ref. 5; AAF03562/AAL36149/AAL36150/CAA73884." evidence="16" ref="5">
    <original>T</original>
    <variation>P</variation>
    <location>
        <position position="279"/>
    </location>
</feature>
<feature type="helix" evidence="22">
    <location>
        <begin position="801"/>
        <end position="812"/>
    </location>
</feature>
<feature type="strand" evidence="22">
    <location>
        <begin position="813"/>
        <end position="815"/>
    </location>
</feature>
<feature type="turn" evidence="22">
    <location>
        <begin position="824"/>
        <end position="829"/>
    </location>
</feature>
<feature type="helix" evidence="22">
    <location>
        <begin position="832"/>
        <end position="841"/>
    </location>
</feature>
<feature type="turn" evidence="22">
    <location>
        <begin position="843"/>
        <end position="845"/>
    </location>
</feature>
<feature type="helix" evidence="22">
    <location>
        <begin position="856"/>
        <end position="871"/>
    </location>
</feature>
<feature type="helix" evidence="22">
    <location>
        <begin position="879"/>
        <end position="884"/>
    </location>
</feature>
<feature type="helix" evidence="22">
    <location>
        <begin position="891"/>
        <end position="905"/>
    </location>
</feature>
<gene>
    <name type="primary">SMTN</name>
    <name type="synonym">SMSMO</name>
</gene>
<dbReference type="EMBL" id="Z49989">
    <property type="protein sequence ID" value="CAA90281.2"/>
    <property type="molecule type" value="mRNA"/>
</dbReference>
<dbReference type="EMBL" id="AJ010306">
    <property type="protein sequence ID" value="CAA09077.2"/>
    <property type="molecule type" value="mRNA"/>
</dbReference>
<dbReference type="EMBL" id="Y13492">
    <property type="protein sequence ID" value="CAA73884.2"/>
    <property type="status" value="ALT_FRAME"/>
    <property type="molecule type" value="mRNA"/>
</dbReference>
<dbReference type="EMBL" id="AY061971">
    <property type="protein sequence ID" value="AAL36149.1"/>
    <property type="status" value="ALT_FRAME"/>
    <property type="molecule type" value="mRNA"/>
</dbReference>
<dbReference type="EMBL" id="AY061972">
    <property type="protein sequence ID" value="AAL36150.1"/>
    <property type="status" value="ALT_FRAME"/>
    <property type="molecule type" value="mRNA"/>
</dbReference>
<dbReference type="EMBL" id="AF115570">
    <property type="protein sequence ID" value="AAF03562.1"/>
    <property type="molecule type" value="Genomic_DNA"/>
</dbReference>
<dbReference type="EMBL" id="AF115552">
    <property type="protein sequence ID" value="AAF03562.1"/>
    <property type="status" value="JOINED"/>
    <property type="molecule type" value="Genomic_DNA"/>
</dbReference>
<dbReference type="EMBL" id="AF115553">
    <property type="protein sequence ID" value="AAF03562.1"/>
    <property type="status" value="JOINED"/>
    <property type="molecule type" value="Genomic_DNA"/>
</dbReference>
<dbReference type="EMBL" id="AF115554">
    <property type="protein sequence ID" value="AAF03562.1"/>
    <property type="status" value="JOINED"/>
    <property type="molecule type" value="Genomic_DNA"/>
</dbReference>
<dbReference type="EMBL" id="AF115555">
    <property type="protein sequence ID" value="AAF03562.1"/>
    <property type="status" value="JOINED"/>
    <property type="molecule type" value="Genomic_DNA"/>
</dbReference>
<dbReference type="EMBL" id="AF115556">
    <property type="protein sequence ID" value="AAF03562.1"/>
    <property type="status" value="JOINED"/>
    <property type="molecule type" value="Genomic_DNA"/>
</dbReference>
<dbReference type="EMBL" id="AF115557">
    <property type="protein sequence ID" value="AAF03562.1"/>
    <property type="status" value="JOINED"/>
    <property type="molecule type" value="Genomic_DNA"/>
</dbReference>
<dbReference type="EMBL" id="AF115558">
    <property type="protein sequence ID" value="AAF03562.1"/>
    <property type="status" value="JOINED"/>
    <property type="molecule type" value="Genomic_DNA"/>
</dbReference>
<dbReference type="EMBL" id="AF115559">
    <property type="protein sequence ID" value="AAF03562.1"/>
    <property type="status" value="JOINED"/>
    <property type="molecule type" value="Genomic_DNA"/>
</dbReference>
<dbReference type="EMBL" id="AF115560">
    <property type="protein sequence ID" value="AAF03562.1"/>
    <property type="status" value="JOINED"/>
    <property type="molecule type" value="Genomic_DNA"/>
</dbReference>
<dbReference type="EMBL" id="AF115561">
    <property type="protein sequence ID" value="AAF03562.1"/>
    <property type="status" value="JOINED"/>
    <property type="molecule type" value="Genomic_DNA"/>
</dbReference>
<dbReference type="EMBL" id="AF115562">
    <property type="protein sequence ID" value="AAF03562.1"/>
    <property type="status" value="JOINED"/>
    <property type="molecule type" value="Genomic_DNA"/>
</dbReference>
<dbReference type="EMBL" id="AF115563">
    <property type="protein sequence ID" value="AAF03562.1"/>
    <property type="status" value="JOINED"/>
    <property type="molecule type" value="Genomic_DNA"/>
</dbReference>
<dbReference type="EMBL" id="AF115564">
    <property type="protein sequence ID" value="AAF03562.1"/>
    <property type="status" value="JOINED"/>
    <property type="molecule type" value="Genomic_DNA"/>
</dbReference>
<dbReference type="EMBL" id="AF115565">
    <property type="protein sequence ID" value="AAF03562.1"/>
    <property type="status" value="JOINED"/>
    <property type="molecule type" value="Genomic_DNA"/>
</dbReference>
<dbReference type="EMBL" id="AF115566">
    <property type="protein sequence ID" value="AAF03562.1"/>
    <property type="status" value="JOINED"/>
    <property type="molecule type" value="Genomic_DNA"/>
</dbReference>
<dbReference type="EMBL" id="AF115567">
    <property type="protein sequence ID" value="AAF03562.1"/>
    <property type="status" value="JOINED"/>
    <property type="molecule type" value="Genomic_DNA"/>
</dbReference>
<dbReference type="EMBL" id="AF115568">
    <property type="protein sequence ID" value="AAF03562.1"/>
    <property type="status" value="JOINED"/>
    <property type="molecule type" value="Genomic_DNA"/>
</dbReference>
<dbReference type="EMBL" id="AF115569">
    <property type="protein sequence ID" value="AAF03562.1"/>
    <property type="status" value="JOINED"/>
    <property type="molecule type" value="Genomic_DNA"/>
</dbReference>
<dbReference type="EMBL" id="AF115570">
    <property type="protein sequence ID" value="AAF03563.1"/>
    <property type="molecule type" value="Genomic_DNA"/>
</dbReference>
<dbReference type="EMBL" id="AF115560">
    <property type="protein sequence ID" value="AAF03563.1"/>
    <property type="status" value="JOINED"/>
    <property type="molecule type" value="Genomic_DNA"/>
</dbReference>
<dbReference type="EMBL" id="AF115561">
    <property type="protein sequence ID" value="AAF03563.1"/>
    <property type="status" value="JOINED"/>
    <property type="molecule type" value="Genomic_DNA"/>
</dbReference>
<dbReference type="EMBL" id="AF115562">
    <property type="protein sequence ID" value="AAF03563.1"/>
    <property type="status" value="JOINED"/>
    <property type="molecule type" value="Genomic_DNA"/>
</dbReference>
<dbReference type="EMBL" id="AF115563">
    <property type="protein sequence ID" value="AAF03563.1"/>
    <property type="status" value="JOINED"/>
    <property type="molecule type" value="Genomic_DNA"/>
</dbReference>
<dbReference type="EMBL" id="AF115564">
    <property type="protein sequence ID" value="AAF03563.1"/>
    <property type="status" value="JOINED"/>
    <property type="molecule type" value="Genomic_DNA"/>
</dbReference>
<dbReference type="EMBL" id="AF115565">
    <property type="protein sequence ID" value="AAF03563.1"/>
    <property type="status" value="JOINED"/>
    <property type="molecule type" value="Genomic_DNA"/>
</dbReference>
<dbReference type="EMBL" id="AF115566">
    <property type="protein sequence ID" value="AAF03563.1"/>
    <property type="status" value="JOINED"/>
    <property type="molecule type" value="Genomic_DNA"/>
</dbReference>
<dbReference type="EMBL" id="AF115567">
    <property type="protein sequence ID" value="AAF03563.1"/>
    <property type="status" value="JOINED"/>
    <property type="molecule type" value="Genomic_DNA"/>
</dbReference>
<dbReference type="EMBL" id="AF115568">
    <property type="protein sequence ID" value="AAF03563.1"/>
    <property type="status" value="JOINED"/>
    <property type="molecule type" value="Genomic_DNA"/>
</dbReference>
<dbReference type="EMBL" id="AF115569">
    <property type="protein sequence ID" value="AAF03563.1"/>
    <property type="status" value="JOINED"/>
    <property type="molecule type" value="Genomic_DNA"/>
</dbReference>
<dbReference type="EMBL" id="AF064238">
    <property type="protein sequence ID" value="AAF01481.3"/>
    <property type="molecule type" value="mRNA"/>
</dbReference>
<dbReference type="EMBL" id="AC005005">
    <property type="protein sequence ID" value="AAD15619.1"/>
    <property type="molecule type" value="Genomic_DNA"/>
</dbReference>
<dbReference type="EMBL" id="CH471095">
    <property type="protein sequence ID" value="EAW59930.1"/>
    <property type="molecule type" value="Genomic_DNA"/>
</dbReference>
<dbReference type="EMBL" id="BC034237">
    <property type="protein sequence ID" value="AAH34237.1"/>
    <property type="molecule type" value="mRNA"/>
</dbReference>
<dbReference type="CCDS" id="CCDS13886.1">
    <molecule id="P53814-1"/>
</dbReference>
<dbReference type="CCDS" id="CCDS13887.1">
    <molecule id="P53814-6"/>
</dbReference>
<dbReference type="CCDS" id="CCDS13888.1">
    <molecule id="P53814-5"/>
</dbReference>
<dbReference type="PIR" id="T09575">
    <property type="entry name" value="T09575"/>
</dbReference>
<dbReference type="RefSeq" id="NP_001193946.1">
    <property type="nucleotide sequence ID" value="NM_001207017.1"/>
</dbReference>
<dbReference type="RefSeq" id="NP_001193947.1">
    <property type="nucleotide sequence ID" value="NM_001207018.1"/>
</dbReference>
<dbReference type="RefSeq" id="NP_001369567.1">
    <molecule id="P53814-5"/>
    <property type="nucleotide sequence ID" value="NM_001382638.1"/>
</dbReference>
<dbReference type="RefSeq" id="NP_001369568.1">
    <molecule id="P53814-5"/>
    <property type="nucleotide sequence ID" value="NM_001382639.1"/>
</dbReference>
<dbReference type="RefSeq" id="NP_001369569.1">
    <molecule id="P53814-5"/>
    <property type="nucleotide sequence ID" value="NM_001382640.1"/>
</dbReference>
<dbReference type="RefSeq" id="NP_001369570.1">
    <molecule id="P53814-5"/>
    <property type="nucleotide sequence ID" value="NM_001382641.1"/>
</dbReference>
<dbReference type="RefSeq" id="NP_008863.3">
    <molecule id="P53814-1"/>
    <property type="nucleotide sequence ID" value="NM_006932.4"/>
</dbReference>
<dbReference type="RefSeq" id="NP_599031.1">
    <molecule id="P53814-5"/>
    <property type="nucleotide sequence ID" value="NM_134269.3"/>
</dbReference>
<dbReference type="RefSeq" id="NP_599032.2">
    <molecule id="P53814-6"/>
    <property type="nucleotide sequence ID" value="NM_134270.3"/>
</dbReference>
<dbReference type="PDB" id="2D87">
    <property type="method" value="NMR"/>
    <property type="chains" value="A=801-868"/>
</dbReference>
<dbReference type="PDBsum" id="2D87"/>
<dbReference type="SMR" id="P53814"/>
<dbReference type="BioGRID" id="112416">
    <property type="interactions" value="44"/>
</dbReference>
<dbReference type="FunCoup" id="P53814">
    <property type="interactions" value="451"/>
</dbReference>
<dbReference type="IntAct" id="P53814">
    <property type="interactions" value="42"/>
</dbReference>
<dbReference type="MINT" id="P53814"/>
<dbReference type="STRING" id="9606.ENSP00000484398"/>
<dbReference type="GlyGen" id="P53814">
    <property type="glycosylation" value="8 sites, 1 O-linked glycan (6 sites)"/>
</dbReference>
<dbReference type="iPTMnet" id="P53814"/>
<dbReference type="PhosphoSitePlus" id="P53814"/>
<dbReference type="BioMuta" id="SMTN"/>
<dbReference type="DMDM" id="338817991"/>
<dbReference type="jPOST" id="P53814"/>
<dbReference type="MassIVE" id="P53814"/>
<dbReference type="PaxDb" id="9606-ENSP00000484398"/>
<dbReference type="PeptideAtlas" id="P53814"/>
<dbReference type="ProteomicsDB" id="56630">
    <molecule id="P53814-1"/>
</dbReference>
<dbReference type="ProteomicsDB" id="56631">
    <molecule id="P53814-2"/>
</dbReference>
<dbReference type="ProteomicsDB" id="56632">
    <molecule id="P53814-5"/>
</dbReference>
<dbReference type="ProteomicsDB" id="56633">
    <molecule id="P53814-6"/>
</dbReference>
<dbReference type="Pumba" id="P53814"/>
<dbReference type="Antibodypedia" id="3445">
    <property type="antibodies" value="184 antibodies from 26 providers"/>
</dbReference>
<dbReference type="DNASU" id="6525"/>
<dbReference type="Ensembl" id="ENST00000333137.12">
    <molecule id="P53814-5"/>
    <property type="protein sequence ID" value="ENSP00000329532.7"/>
    <property type="gene ID" value="ENSG00000183963.19"/>
</dbReference>
<dbReference type="Ensembl" id="ENST00000347557.6">
    <molecule id="P53814-1"/>
    <property type="protein sequence ID" value="ENSP00000328635.5"/>
    <property type="gene ID" value="ENSG00000183963.19"/>
</dbReference>
<dbReference type="Ensembl" id="ENST00000358743.5">
    <molecule id="P53814-6"/>
    <property type="protein sequence ID" value="ENSP00000351593.1"/>
    <property type="gene ID" value="ENSG00000183963.19"/>
</dbReference>
<dbReference type="GeneID" id="6525"/>
<dbReference type="KEGG" id="hsa:6525"/>
<dbReference type="MANE-Select" id="ENST00000333137.12">
    <molecule id="P53814-5"/>
    <property type="protein sequence ID" value="ENSP00000329532.7"/>
    <property type="RefSeq nucleotide sequence ID" value="NM_134269.3"/>
    <property type="RefSeq protein sequence ID" value="NP_599031.1"/>
</dbReference>
<dbReference type="UCSC" id="uc003ajk.3">
    <molecule id="P53814-1"/>
    <property type="organism name" value="human"/>
</dbReference>
<dbReference type="AGR" id="HGNC:11126"/>
<dbReference type="CTD" id="6525"/>
<dbReference type="DisGeNET" id="6525"/>
<dbReference type="GeneCards" id="SMTN"/>
<dbReference type="HGNC" id="HGNC:11126">
    <property type="gene designation" value="SMTN"/>
</dbReference>
<dbReference type="HPA" id="ENSG00000183963">
    <property type="expression patterns" value="Tissue enhanced (intestine, urinary bladder)"/>
</dbReference>
<dbReference type="MIM" id="602127">
    <property type="type" value="gene"/>
</dbReference>
<dbReference type="neXtProt" id="NX_P53814"/>
<dbReference type="OpenTargets" id="ENSG00000183963"/>
<dbReference type="PharmGKB" id="PA35975"/>
<dbReference type="VEuPathDB" id="HostDB:ENSG00000183963"/>
<dbReference type="eggNOG" id="KOG4678">
    <property type="taxonomic scope" value="Eukaryota"/>
</dbReference>
<dbReference type="GeneTree" id="ENSGT00940000161655"/>
<dbReference type="HOGENOM" id="CLU_014660_0_0_1"/>
<dbReference type="InParanoid" id="P53814"/>
<dbReference type="OrthoDB" id="10017054at2759"/>
<dbReference type="PAN-GO" id="P53814">
    <property type="GO annotations" value="3 GO annotations based on evolutionary models"/>
</dbReference>
<dbReference type="TreeFam" id="TF316716"/>
<dbReference type="PathwayCommons" id="P53814"/>
<dbReference type="SignaLink" id="P53814"/>
<dbReference type="BioGRID-ORCS" id="6525">
    <property type="hits" value="25 hits in 1159 CRISPR screens"/>
</dbReference>
<dbReference type="ChiTaRS" id="SMTN">
    <property type="organism name" value="human"/>
</dbReference>
<dbReference type="EvolutionaryTrace" id="P53814"/>
<dbReference type="GeneWiki" id="SMTN"/>
<dbReference type="GenomeRNAi" id="6525"/>
<dbReference type="Pharos" id="P53814">
    <property type="development level" value="Tbio"/>
</dbReference>
<dbReference type="PRO" id="PR:P53814"/>
<dbReference type="Proteomes" id="UP000005640">
    <property type="component" value="Chromosome 22"/>
</dbReference>
<dbReference type="RNAct" id="P53814">
    <property type="molecule type" value="protein"/>
</dbReference>
<dbReference type="Bgee" id="ENSG00000183963">
    <property type="expression patterns" value="Expressed in lower esophagus muscularis layer and 163 other cell types or tissues"/>
</dbReference>
<dbReference type="ExpressionAtlas" id="P53814">
    <property type="expression patterns" value="baseline and differential"/>
</dbReference>
<dbReference type="GO" id="GO:0015629">
    <property type="term" value="C:actin cytoskeleton"/>
    <property type="evidence" value="ECO:0000304"/>
    <property type="project" value="ProtInc"/>
</dbReference>
<dbReference type="GO" id="GO:0005737">
    <property type="term" value="C:cytoplasm"/>
    <property type="evidence" value="ECO:0007669"/>
    <property type="project" value="UniProtKB-KW"/>
</dbReference>
<dbReference type="GO" id="GO:0005856">
    <property type="term" value="C:cytoskeleton"/>
    <property type="evidence" value="ECO:0000304"/>
    <property type="project" value="ProtInc"/>
</dbReference>
<dbReference type="GO" id="GO:0003779">
    <property type="term" value="F:actin binding"/>
    <property type="evidence" value="ECO:0000304"/>
    <property type="project" value="ProtInc"/>
</dbReference>
<dbReference type="GO" id="GO:0008307">
    <property type="term" value="F:structural constituent of muscle"/>
    <property type="evidence" value="ECO:0000304"/>
    <property type="project" value="ProtInc"/>
</dbReference>
<dbReference type="GO" id="GO:0007517">
    <property type="term" value="P:muscle organ development"/>
    <property type="evidence" value="ECO:0000304"/>
    <property type="project" value="ProtInc"/>
</dbReference>
<dbReference type="GO" id="GO:0006939">
    <property type="term" value="P:smooth muscle contraction"/>
    <property type="evidence" value="ECO:0000304"/>
    <property type="project" value="ProtInc"/>
</dbReference>
<dbReference type="CDD" id="cd21258">
    <property type="entry name" value="CH_SMTNA"/>
    <property type="match status" value="1"/>
</dbReference>
<dbReference type="FunFam" id="1.10.418.10:FF:000009">
    <property type="entry name" value="smoothelin isoform X2"/>
    <property type="match status" value="1"/>
</dbReference>
<dbReference type="Gene3D" id="1.10.418.10">
    <property type="entry name" value="Calponin-like domain"/>
    <property type="match status" value="1"/>
</dbReference>
<dbReference type="InterPro" id="IPR001715">
    <property type="entry name" value="CH_dom"/>
</dbReference>
<dbReference type="InterPro" id="IPR036872">
    <property type="entry name" value="CH_dom_sf"/>
</dbReference>
<dbReference type="InterPro" id="IPR050540">
    <property type="entry name" value="F-actin_Monoox_Mical"/>
</dbReference>
<dbReference type="InterPro" id="IPR022189">
    <property type="entry name" value="SMTN"/>
</dbReference>
<dbReference type="PANTHER" id="PTHR23167">
    <property type="entry name" value="CALPONIN HOMOLOGY DOMAIN-CONTAINING PROTEIN DDB_G0272472-RELATED"/>
    <property type="match status" value="1"/>
</dbReference>
<dbReference type="PANTHER" id="PTHR23167:SF52">
    <property type="entry name" value="SMOOTHELIN"/>
    <property type="match status" value="1"/>
</dbReference>
<dbReference type="Pfam" id="PF00307">
    <property type="entry name" value="CH"/>
    <property type="match status" value="1"/>
</dbReference>
<dbReference type="Pfam" id="PF12510">
    <property type="entry name" value="Smoothelin"/>
    <property type="match status" value="3"/>
</dbReference>
<dbReference type="SMART" id="SM00033">
    <property type="entry name" value="CH"/>
    <property type="match status" value="1"/>
</dbReference>
<dbReference type="SUPFAM" id="SSF47576">
    <property type="entry name" value="Calponin-homology domain, CH-domain"/>
    <property type="match status" value="1"/>
</dbReference>
<dbReference type="PROSITE" id="PS50021">
    <property type="entry name" value="CH"/>
    <property type="match status" value="1"/>
</dbReference>
<proteinExistence type="evidence at protein level"/>
<reference key="1">
    <citation type="journal article" date="1996" name="J. Cell Biol.">
        <title>Smoothelin, a novel cytoskeletal protein specific for smooth muscle cells.</title>
        <authorList>
            <person name="van der Loop F.T.L."/>
            <person name="Schaart G."/>
            <person name="Timmer E.D.J."/>
            <person name="Ramaekers F.C.S."/>
            <person name="van Eys G.J.J.M."/>
        </authorList>
    </citation>
    <scope>NUCLEOTIDE SEQUENCE [MRNA] (ISOFORM A)</scope>
    <source>
        <tissue>Colon smooth muscle</tissue>
    </source>
</reference>
<reference key="2">
    <citation type="submission" date="2001-07" db="EMBL/GenBank/DDBJ databases">
        <authorList>
            <person name="Rensen S."/>
        </authorList>
    </citation>
    <scope>SEQUENCE REVISION TO N-TERMINUS</scope>
</reference>
<reference key="3">
    <citation type="journal article" date="1999" name="J. Mol. Med.">
        <title>A novel isoform of the smooth muscle cell differentiation marker smoothelin.</title>
        <authorList>
            <person name="Kraemer J."/>
            <person name="Aguirre-Arteta A.M."/>
            <person name="Thiel C."/>
            <person name="Gross M.C."/>
            <person name="Dietz R."/>
            <person name="Cardoso M.C."/>
            <person name="Leonhardt H."/>
        </authorList>
    </citation>
    <scope>NUCLEOTIDE SEQUENCE [MRNA] (ISOFORM B)</scope>
    <scope>VARIANTS ASP-455 AND PRO-547</scope>
    <source>
        <tissue>Fetus</tissue>
    </source>
</reference>
<reference key="4">
    <citation type="journal article" date="2001" name="J. Vasc. Res.">
        <title>Identification and characterization of novel smoothelin isoforms in vascular smooth muscle.</title>
        <authorList>
            <person name="Kraemer J."/>
            <person name="Quensel C."/>
            <person name="Meding J."/>
            <person name="Cardoso M.C."/>
            <person name="Leonhardt H."/>
        </authorList>
    </citation>
    <scope>NUCLEOTIDE SEQUENCE [MRNA] (ISOFORMS B AND B2)</scope>
    <scope>VARIANT ASP-455</scope>
</reference>
<reference key="5">
    <citation type="journal article" date="2002" name="Cardiovasc. Res.">
        <title>Expression of the smoothelin gene is mediated by alternative promoters.</title>
        <authorList>
            <person name="Rensen S.S."/>
            <person name="Thijssen V.L."/>
            <person name="De Vries C.J."/>
            <person name="Doevendans P.A."/>
            <person name="Detera-Wadleigh S.D."/>
            <person name="Van Eys G.J.J.M."/>
        </authorList>
    </citation>
    <scope>NUCLEOTIDE SEQUENCE [GENOMIC DNA / MRNA] (ISOFORMS A; B; B2 AND B3)</scope>
    <scope>ALTERNATIVE PROMOTER USAGE</scope>
    <scope>VARIANT ASP-455</scope>
    <source>
        <tissue>Vascular smooth muscle</tissue>
    </source>
</reference>
<reference key="6">
    <citation type="submission" date="2000-05" db="EMBL/GenBank/DDBJ databases">
        <authorList>
            <person name="Kraemer J."/>
            <person name="Arteta-Aguirre A.M."/>
            <person name="Cardoso M.C."/>
            <person name="Leonhardt H."/>
        </authorList>
    </citation>
    <scope>NUCLEOTIDE SEQUENCE [MRNA] (ISOFORM B2)</scope>
    <scope>VARIANTS ASP-455 AND PRO-547</scope>
</reference>
<reference key="7">
    <citation type="journal article" date="1999" name="Nature">
        <title>The DNA sequence of human chromosome 22.</title>
        <authorList>
            <person name="Dunham I."/>
            <person name="Hunt A.R."/>
            <person name="Collins J.E."/>
            <person name="Bruskiewich R."/>
            <person name="Beare D.M."/>
            <person name="Clamp M."/>
            <person name="Smink L.J."/>
            <person name="Ainscough R."/>
            <person name="Almeida J.P."/>
            <person name="Babbage A.K."/>
            <person name="Bagguley C."/>
            <person name="Bailey J."/>
            <person name="Barlow K.F."/>
            <person name="Bates K.N."/>
            <person name="Beasley O.P."/>
            <person name="Bird C.P."/>
            <person name="Blakey S.E."/>
            <person name="Bridgeman A.M."/>
            <person name="Buck D."/>
            <person name="Burgess J."/>
            <person name="Burrill W.D."/>
            <person name="Burton J."/>
            <person name="Carder C."/>
            <person name="Carter N.P."/>
            <person name="Chen Y."/>
            <person name="Clark G."/>
            <person name="Clegg S.M."/>
            <person name="Cobley V.E."/>
            <person name="Cole C.G."/>
            <person name="Collier R.E."/>
            <person name="Connor R."/>
            <person name="Conroy D."/>
            <person name="Corby N.R."/>
            <person name="Coville G.J."/>
            <person name="Cox A.V."/>
            <person name="Davis J."/>
            <person name="Dawson E."/>
            <person name="Dhami P.D."/>
            <person name="Dockree C."/>
            <person name="Dodsworth S.J."/>
            <person name="Durbin R.M."/>
            <person name="Ellington A.G."/>
            <person name="Evans K.L."/>
            <person name="Fey J.M."/>
            <person name="Fleming K."/>
            <person name="French L."/>
            <person name="Garner A.A."/>
            <person name="Gilbert J.G.R."/>
            <person name="Goward M.E."/>
            <person name="Grafham D.V."/>
            <person name="Griffiths M.N.D."/>
            <person name="Hall C."/>
            <person name="Hall R.E."/>
            <person name="Hall-Tamlyn G."/>
            <person name="Heathcott R.W."/>
            <person name="Ho S."/>
            <person name="Holmes S."/>
            <person name="Hunt S.E."/>
            <person name="Jones M.C."/>
            <person name="Kershaw J."/>
            <person name="Kimberley A.M."/>
            <person name="King A."/>
            <person name="Laird G.K."/>
            <person name="Langford C.F."/>
            <person name="Leversha M.A."/>
            <person name="Lloyd C."/>
            <person name="Lloyd D.M."/>
            <person name="Martyn I.D."/>
            <person name="Mashreghi-Mohammadi M."/>
            <person name="Matthews L.H."/>
            <person name="Mccann O.T."/>
            <person name="Mcclay J."/>
            <person name="Mclaren S."/>
            <person name="McMurray A.A."/>
            <person name="Milne S.A."/>
            <person name="Mortimore B.J."/>
            <person name="Odell C.N."/>
            <person name="Pavitt R."/>
            <person name="Pearce A.V."/>
            <person name="Pearson D."/>
            <person name="Phillimore B.J.C.T."/>
            <person name="Phillips S.H."/>
            <person name="Plumb R.W."/>
            <person name="Ramsay H."/>
            <person name="Ramsey Y."/>
            <person name="Rogers L."/>
            <person name="Ross M.T."/>
            <person name="Scott C.E."/>
            <person name="Sehra H.K."/>
            <person name="Skuce C.D."/>
            <person name="Smalley S."/>
            <person name="Smith M.L."/>
            <person name="Soderlund C."/>
            <person name="Spragon L."/>
            <person name="Steward C.A."/>
            <person name="Sulston J.E."/>
            <person name="Swann R.M."/>
            <person name="Vaudin M."/>
            <person name="Wall M."/>
            <person name="Wallis J.M."/>
            <person name="Whiteley M.N."/>
            <person name="Willey D.L."/>
            <person name="Williams L."/>
            <person name="Williams S.A."/>
            <person name="Williamson H."/>
            <person name="Wilmer T.E."/>
            <person name="Wilming L."/>
            <person name="Wright C.L."/>
            <person name="Hubbard T."/>
            <person name="Bentley D.R."/>
            <person name="Beck S."/>
            <person name="Rogers J."/>
            <person name="Shimizu N."/>
            <person name="Minoshima S."/>
            <person name="Kawasaki K."/>
            <person name="Sasaki T."/>
            <person name="Asakawa S."/>
            <person name="Kudoh J."/>
            <person name="Shintani A."/>
            <person name="Shibuya K."/>
            <person name="Yoshizaki Y."/>
            <person name="Aoki N."/>
            <person name="Mitsuyama S."/>
            <person name="Roe B.A."/>
            <person name="Chen F."/>
            <person name="Chu L."/>
            <person name="Crabtree J."/>
            <person name="Deschamps S."/>
            <person name="Do A."/>
            <person name="Do T."/>
            <person name="Dorman A."/>
            <person name="Fang F."/>
            <person name="Fu Y."/>
            <person name="Hu P."/>
            <person name="Hua A."/>
            <person name="Kenton S."/>
            <person name="Lai H."/>
            <person name="Lao H.I."/>
            <person name="Lewis J."/>
            <person name="Lewis S."/>
            <person name="Lin S.-P."/>
            <person name="Loh P."/>
            <person name="Malaj E."/>
            <person name="Nguyen T."/>
            <person name="Pan H."/>
            <person name="Phan S."/>
            <person name="Qi S."/>
            <person name="Qian Y."/>
            <person name="Ray L."/>
            <person name="Ren Q."/>
            <person name="Shaull S."/>
            <person name="Sloan D."/>
            <person name="Song L."/>
            <person name="Wang Q."/>
            <person name="Wang Y."/>
            <person name="Wang Z."/>
            <person name="White J."/>
            <person name="Willingham D."/>
            <person name="Wu H."/>
            <person name="Yao Z."/>
            <person name="Zhan M."/>
            <person name="Zhang G."/>
            <person name="Chissoe S."/>
            <person name="Murray J."/>
            <person name="Miller N."/>
            <person name="Minx P."/>
            <person name="Fulton R."/>
            <person name="Johnson D."/>
            <person name="Bemis G."/>
            <person name="Bentley D."/>
            <person name="Bradshaw H."/>
            <person name="Bourne S."/>
            <person name="Cordes M."/>
            <person name="Du Z."/>
            <person name="Fulton L."/>
            <person name="Goela D."/>
            <person name="Graves T."/>
            <person name="Hawkins J."/>
            <person name="Hinds K."/>
            <person name="Kemp K."/>
            <person name="Latreille P."/>
            <person name="Layman D."/>
            <person name="Ozersky P."/>
            <person name="Rohlfing T."/>
            <person name="Scheet P."/>
            <person name="Walker C."/>
            <person name="Wamsley A."/>
            <person name="Wohldmann P."/>
            <person name="Pepin K."/>
            <person name="Nelson J."/>
            <person name="Korf I."/>
            <person name="Bedell J.A."/>
            <person name="Hillier L.W."/>
            <person name="Mardis E."/>
            <person name="Waterston R."/>
            <person name="Wilson R."/>
            <person name="Emanuel B.S."/>
            <person name="Shaikh T."/>
            <person name="Kurahashi H."/>
            <person name="Saitta S."/>
            <person name="Budarf M.L."/>
            <person name="McDermid H.E."/>
            <person name="Johnson A."/>
            <person name="Wong A.C.C."/>
            <person name="Morrow B.E."/>
            <person name="Edelmann L."/>
            <person name="Kim U.J."/>
            <person name="Shizuya H."/>
            <person name="Simon M.I."/>
            <person name="Dumanski J.P."/>
            <person name="Peyrard M."/>
            <person name="Kedra D."/>
            <person name="Seroussi E."/>
            <person name="Fransson I."/>
            <person name="Tapia I."/>
            <person name="Bruder C.E."/>
            <person name="O'Brien K.P."/>
            <person name="Wilkinson P."/>
            <person name="Bodenteich A."/>
            <person name="Hartman K."/>
            <person name="Hu X."/>
            <person name="Khan A.S."/>
            <person name="Lane L."/>
            <person name="Tilahun Y."/>
            <person name="Wright H."/>
        </authorList>
    </citation>
    <scope>NUCLEOTIDE SEQUENCE [LARGE SCALE GENOMIC DNA]</scope>
</reference>
<reference key="8">
    <citation type="submission" date="2005-07" db="EMBL/GenBank/DDBJ databases">
        <authorList>
            <person name="Mural R.J."/>
            <person name="Istrail S."/>
            <person name="Sutton G.G."/>
            <person name="Florea L."/>
            <person name="Halpern A.L."/>
            <person name="Mobarry C.M."/>
            <person name="Lippert R."/>
            <person name="Walenz B."/>
            <person name="Shatkay H."/>
            <person name="Dew I."/>
            <person name="Miller J.R."/>
            <person name="Flanigan M.J."/>
            <person name="Edwards N.J."/>
            <person name="Bolanos R."/>
            <person name="Fasulo D."/>
            <person name="Halldorsson B.V."/>
            <person name="Hannenhalli S."/>
            <person name="Turner R."/>
            <person name="Yooseph S."/>
            <person name="Lu F."/>
            <person name="Nusskern D.R."/>
            <person name="Shue B.C."/>
            <person name="Zheng X.H."/>
            <person name="Zhong F."/>
            <person name="Delcher A.L."/>
            <person name="Huson D.H."/>
            <person name="Kravitz S.A."/>
            <person name="Mouchard L."/>
            <person name="Reinert K."/>
            <person name="Remington K.A."/>
            <person name="Clark A.G."/>
            <person name="Waterman M.S."/>
            <person name="Eichler E.E."/>
            <person name="Adams M.D."/>
            <person name="Hunkapiller M.W."/>
            <person name="Myers E.W."/>
            <person name="Venter J.C."/>
        </authorList>
    </citation>
    <scope>NUCLEOTIDE SEQUENCE [LARGE SCALE GENOMIC DNA]</scope>
    <scope>VARIANT PRO-547</scope>
</reference>
<reference key="9">
    <citation type="journal article" date="2004" name="Genome Res.">
        <title>The status, quality, and expansion of the NIH full-length cDNA project: the Mammalian Gene Collection (MGC).</title>
        <authorList>
            <consortium name="The MGC Project Team"/>
        </authorList>
    </citation>
    <scope>NUCLEOTIDE SEQUENCE [LARGE SCALE MRNA] (ISOFORM B2)</scope>
    <scope>VARIANT PRO-547</scope>
    <source>
        <tissue>Uterus</tissue>
    </source>
</reference>
<reference key="10">
    <citation type="journal article" date="2008" name="Proc. Natl. Acad. Sci. U.S.A.">
        <title>A quantitative atlas of mitotic phosphorylation.</title>
        <authorList>
            <person name="Dephoure N."/>
            <person name="Zhou C."/>
            <person name="Villen J."/>
            <person name="Beausoleil S.A."/>
            <person name="Bakalarski C.E."/>
            <person name="Elledge S.J."/>
            <person name="Gygi S.P."/>
        </authorList>
    </citation>
    <scope>PHOSPHORYLATION [LARGE SCALE ANALYSIS] AT SER-301; SER-304; SER-341; THR-373; SER-503; SER-514; SER-576 AND SER-729</scope>
    <scope>IDENTIFICATION BY MASS SPECTROMETRY [LARGE SCALE ANALYSIS]</scope>
    <source>
        <tissue>Cervix carcinoma</tissue>
    </source>
</reference>
<reference key="11">
    <citation type="journal article" date="2009" name="Sci. Signal.">
        <title>Quantitative phosphoproteomic analysis of T cell receptor signaling reveals system-wide modulation of protein-protein interactions.</title>
        <authorList>
            <person name="Mayya V."/>
            <person name="Lundgren D.H."/>
            <person name="Hwang S.-I."/>
            <person name="Rezaul K."/>
            <person name="Wu L."/>
            <person name="Eng J.K."/>
            <person name="Rodionov V."/>
            <person name="Han D.K."/>
        </authorList>
    </citation>
    <scope>PHOSPHORYLATION [LARGE SCALE ANALYSIS] AT SER-357 AND THR-360</scope>
    <scope>IDENTIFICATION BY MASS SPECTROMETRY [LARGE SCALE ANALYSIS]</scope>
    <source>
        <tissue>Leukemic T-cell</tissue>
    </source>
</reference>
<reference key="12">
    <citation type="journal article" date="2010" name="Sci. Signal.">
        <title>Quantitative phosphoproteomics reveals widespread full phosphorylation site occupancy during mitosis.</title>
        <authorList>
            <person name="Olsen J.V."/>
            <person name="Vermeulen M."/>
            <person name="Santamaria A."/>
            <person name="Kumar C."/>
            <person name="Miller M.L."/>
            <person name="Jensen L.J."/>
            <person name="Gnad F."/>
            <person name="Cox J."/>
            <person name="Jensen T.S."/>
            <person name="Nigg E.A."/>
            <person name="Brunak S."/>
            <person name="Mann M."/>
        </authorList>
    </citation>
    <scope>PHOSPHORYLATION [LARGE SCALE ANALYSIS] AT SER-299; SER-301; SER-304; THR-351; SER-357; THR-360; THR-373 AND SER-514</scope>
    <scope>IDENTIFICATION BY MASS SPECTROMETRY [LARGE SCALE ANALYSIS]</scope>
    <source>
        <tissue>Cervix carcinoma</tissue>
    </source>
</reference>
<reference key="13">
    <citation type="journal article" date="2012" name="Proc. Natl. Acad. Sci. U.S.A.">
        <title>N-terminal acetylome analyses and functional insights of the N-terminal acetyltransferase NatB.</title>
        <authorList>
            <person name="Van Damme P."/>
            <person name="Lasa M."/>
            <person name="Polevoda B."/>
            <person name="Gazquez C."/>
            <person name="Elosegui-Artola A."/>
            <person name="Kim D.S."/>
            <person name="De Juan-Pardo E."/>
            <person name="Demeyer K."/>
            <person name="Hole K."/>
            <person name="Larrea E."/>
            <person name="Timmerman E."/>
            <person name="Prieto J."/>
            <person name="Arnesen T."/>
            <person name="Sherman F."/>
            <person name="Gevaert K."/>
            <person name="Aldabe R."/>
        </authorList>
    </citation>
    <scope>ACETYLATION [LARGE SCALE ANALYSIS] AT ALA-2</scope>
    <scope>CLEAVAGE OF INITIATOR METHIONINE [LARGE SCALE ANALYSIS]</scope>
    <scope>IDENTIFICATION BY MASS SPECTROMETRY [LARGE SCALE ANALYSIS]</scope>
</reference>
<reference key="14">
    <citation type="journal article" date="2013" name="J. Proteome Res.">
        <title>Toward a comprehensive characterization of a human cancer cell phosphoproteome.</title>
        <authorList>
            <person name="Zhou H."/>
            <person name="Di Palma S."/>
            <person name="Preisinger C."/>
            <person name="Peng M."/>
            <person name="Polat A.N."/>
            <person name="Heck A.J."/>
            <person name="Mohammed S."/>
        </authorList>
    </citation>
    <scope>PHOSPHORYLATION [LARGE SCALE ANALYSIS] AT SER-301; SER-304; SER-341; SER-514; SER-523; SER-729 AND SER-792</scope>
    <scope>IDENTIFICATION BY MASS SPECTROMETRY [LARGE SCALE ANALYSIS]</scope>
    <source>
        <tissue>Cervix carcinoma</tissue>
        <tissue>Erythroleukemia</tissue>
    </source>
</reference>
<reference key="15">
    <citation type="journal article" date="2006" name="Science">
        <title>The consensus coding sequences of human breast and colorectal cancers.</title>
        <authorList>
            <person name="Sjoeblom T."/>
            <person name="Jones S."/>
            <person name="Wood L.D."/>
            <person name="Parsons D.W."/>
            <person name="Lin J."/>
            <person name="Barber T.D."/>
            <person name="Mandelker D."/>
            <person name="Leary R.J."/>
            <person name="Ptak J."/>
            <person name="Silliman N."/>
            <person name="Szabo S."/>
            <person name="Buckhaults P."/>
            <person name="Farrell C."/>
            <person name="Meeh P."/>
            <person name="Markowitz S.D."/>
            <person name="Willis J."/>
            <person name="Dawson D."/>
            <person name="Willson J.K.V."/>
            <person name="Gazdar A.F."/>
            <person name="Hartigan J."/>
            <person name="Wu L."/>
            <person name="Liu C."/>
            <person name="Parmigiani G."/>
            <person name="Park B.H."/>
            <person name="Bachman K.E."/>
            <person name="Papadopoulos N."/>
            <person name="Vogelstein B."/>
            <person name="Kinzler K.W."/>
            <person name="Velculescu V.E."/>
        </authorList>
    </citation>
    <scope>VARIANTS [LARGE SCALE ANALYSIS] GLN-637 AND VAL-763</scope>
</reference>
<keyword id="KW-0002">3D-structure</keyword>
<keyword id="KW-0007">Acetylation</keyword>
<keyword id="KW-0877">Alternative promoter usage</keyword>
<keyword id="KW-0025">Alternative splicing</keyword>
<keyword id="KW-0175">Coiled coil</keyword>
<keyword id="KW-0963">Cytoplasm</keyword>
<keyword id="KW-0206">Cytoskeleton</keyword>
<keyword id="KW-0597">Phosphoprotein</keyword>
<keyword id="KW-1267">Proteomics identification</keyword>
<keyword id="KW-1185">Reference proteome</keyword>
<name>SMTN_HUMAN</name>
<sequence>MADEALAGLDEGALRKLLEVTADLAERRRIRSAIRELQRQELEREEEALASKRFRAERQDNKENWLHSQQREAEQRAALARLAGQLESMNDVEELTALLRSAGEYEERKLIRAAIRRVRAQEIEAATLAGRLYSGRPNSGSREDSKGLAAHRLEQCEVPEREEQEQQAEVSKPTPTPEGTSQDVTTVTLLLRAPPGSTSSSPASPSSSPTPASPEPPLEPAEAQCLTAEVPGSPEPPPSPPKTTSPEPQESPTLPSTEGQVVNKLLSGPKETPAAQSPTRGPSDTKRADVAGPRPCQRSLSVLSPRQPAQNRESTPLASGPSSFQRAGSVRDRVHKFTSDSPMAARLQDGTPQAALSPLTPARLLGPSLTSTTPASSSSGSSSRGPSDTSSRFSKEQRGVAQPLAQLRSCPQEEGPRGRGLAARPLENRAGGPVARSEEPGAPLPVAVGTAEPGGSMKTTFTIEIKDGRGQASTGRVLLPTGNQRAELTLGLRAPPTLLSTSSGGKSTITRVNSPGTLARLGSVTHVTSFSHAPPSSRGGCSIKMEAEPAEPLAAAVEAANGAEQTRVNKAPEGRSPLSAEELMTIEDEGVLDKMLDQSTDFEERKLIRAALRELRQRKRDQRDKERERRLQEARGRPGEGRGNTATETTTRHSQRAADGSAVSTVTKTERLVHSNDGTRTARTTTVESSFVRRSENGSGSTMMQTKTFSSSSSSKKMGSIFDREDQASPRAGSLAALEKRQAEKKKELMKAQSLPKTSASQARKAMIEKLEKEGAAGSPGGPRAAVQRSTSFGVPNANSIKQMLLDWCRAKTRGYEHVDIQNFSSSWSDGMAFCALVHNFFPEAFDYGQLSPQNRRQNFEVAFSSAEMLVDCVPLVEVDDMMIMGKKPDPKCVFTYVQSLYNHLRRHELRLRGKNV</sequence>
<evidence type="ECO:0000255" key="1"/>
<evidence type="ECO:0000255" key="2">
    <source>
        <dbReference type="PROSITE-ProRule" id="PRU00044"/>
    </source>
</evidence>
<evidence type="ECO:0000256" key="3">
    <source>
        <dbReference type="SAM" id="MobiDB-lite"/>
    </source>
</evidence>
<evidence type="ECO:0000269" key="4">
    <source>
    </source>
</evidence>
<evidence type="ECO:0000269" key="5">
    <source>
    </source>
</evidence>
<evidence type="ECO:0000269" key="6">
    <source>
    </source>
</evidence>
<evidence type="ECO:0000269" key="7">
    <source>
    </source>
</evidence>
<evidence type="ECO:0000269" key="8">
    <source>
    </source>
</evidence>
<evidence type="ECO:0000269" key="9">
    <source ref="6"/>
</evidence>
<evidence type="ECO:0000269" key="10">
    <source ref="8"/>
</evidence>
<evidence type="ECO:0000303" key="11">
    <source>
    </source>
</evidence>
<evidence type="ECO:0000303" key="12">
    <source>
    </source>
</evidence>
<evidence type="ECO:0000303" key="13">
    <source>
    </source>
</evidence>
<evidence type="ECO:0000303" key="14">
    <source>
    </source>
</evidence>
<evidence type="ECO:0000303" key="15">
    <source ref="6"/>
</evidence>
<evidence type="ECO:0000305" key="16"/>
<evidence type="ECO:0007744" key="17">
    <source>
    </source>
</evidence>
<evidence type="ECO:0007744" key="18">
    <source>
    </source>
</evidence>
<evidence type="ECO:0007744" key="19">
    <source>
    </source>
</evidence>
<evidence type="ECO:0007744" key="20">
    <source>
    </source>
</evidence>
<evidence type="ECO:0007744" key="21">
    <source>
    </source>
</evidence>
<evidence type="ECO:0007829" key="22">
    <source>
        <dbReference type="PDB" id="2D87"/>
    </source>
</evidence>
<protein>
    <recommendedName>
        <fullName>Smoothelin</fullName>
    </recommendedName>
</protein>
<comment type="function">
    <text>Structural protein of the cytoskeleton.</text>
</comment>
<comment type="interaction">
    <interactant intactId="EBI-11100581">
        <id>P53814-5</id>
    </interactant>
    <interactant intactId="EBI-12221557">
        <id>Q4L180-3</id>
        <label>FILIP1L</label>
    </interactant>
    <organismsDiffer>false</organismsDiffer>
    <experiments>3</experiments>
</comment>
<comment type="interaction">
    <interactant intactId="EBI-11100581">
        <id>P53814-5</id>
    </interactant>
    <interactant intactId="EBI-720609">
        <id>O76024</id>
        <label>WFS1</label>
    </interactant>
    <organismsDiffer>false</organismsDiffer>
    <experiments>3</experiments>
</comment>
<comment type="subcellular location">
    <subcellularLocation>
        <location>Cytoplasm</location>
        <location>Cytoskeleton</location>
    </subcellularLocation>
    <text>Exhibits a filamentous organization.</text>
</comment>
<comment type="alternative products">
    <event type="alternative promoter"/>
    <event type="alternative splicing"/>
    <isoform>
        <id>P53814-1</id>
        <name>B</name>
        <name>Long</name>
        <name>B1</name>
        <name>L1</name>
        <sequence type="displayed"/>
    </isoform>
    <isoform>
        <id>P53814-2</id>
        <name>A</name>
        <name>Short</name>
        <sequence type="described" ref="VSP_004398"/>
    </isoform>
    <isoform>
        <id>P53814-5</id>
        <name>B2</name>
        <name>L2</name>
        <sequence type="described" ref="VSP_007020"/>
    </isoform>
    <isoform>
        <id>P53814-6</id>
        <name>B3</name>
        <sequence type="described" ref="VSP_031242"/>
    </isoform>
    <text>Additional isoforms seem to exist.</text>
</comment>
<comment type="tissue specificity">
    <text>Smooth muscle; contractile or vascular (for the long form).</text>
</comment>
<comment type="miscellaneous">
    <molecule>Isoform A</molecule>
    <text evidence="16">Produced by alternative promoter usage.</text>
</comment>
<comment type="similarity">
    <text evidence="16">Belongs to the smoothelin family.</text>
</comment>
<comment type="sequence caution" evidence="16">
    <conflict type="frameshift">
        <sequence resource="EMBL-CDS" id="AAL36149"/>
    </conflict>
</comment>
<comment type="sequence caution" evidence="16">
    <conflict type="frameshift">
        <sequence resource="EMBL-CDS" id="AAL36150"/>
    </conflict>
</comment>
<comment type="sequence caution" evidence="16">
    <conflict type="frameshift">
        <sequence resource="EMBL-CDS" id="CAA73884"/>
    </conflict>
</comment>